<protein>
    <recommendedName>
        <fullName evidence="1">Acyl carrier protein</fullName>
        <shortName evidence="1">ACP</shortName>
    </recommendedName>
</protein>
<feature type="chain" id="PRO_1000139048" description="Acyl carrier protein">
    <location>
        <begin position="1"/>
        <end position="79"/>
    </location>
</feature>
<feature type="domain" description="Carrier" evidence="2">
    <location>
        <begin position="2"/>
        <end position="77"/>
    </location>
</feature>
<feature type="modified residue" description="O-(pantetheine 4'-phosphoryl)serine" evidence="2">
    <location>
        <position position="37"/>
    </location>
</feature>
<keyword id="KW-0963">Cytoplasm</keyword>
<keyword id="KW-0275">Fatty acid biosynthesis</keyword>
<keyword id="KW-0276">Fatty acid metabolism</keyword>
<keyword id="KW-0444">Lipid biosynthesis</keyword>
<keyword id="KW-0443">Lipid metabolism</keyword>
<keyword id="KW-0596">Phosphopantetheine</keyword>
<keyword id="KW-0597">Phosphoprotein</keyword>
<keyword id="KW-1185">Reference proteome</keyword>
<proteinExistence type="inferred from homology"/>
<accession>B4RAG3</accession>
<comment type="function">
    <text evidence="1">Carrier of the growing fatty acid chain in fatty acid biosynthesis.</text>
</comment>
<comment type="pathway">
    <text evidence="1">Lipid metabolism; fatty acid biosynthesis.</text>
</comment>
<comment type="subcellular location">
    <subcellularLocation>
        <location evidence="1">Cytoplasm</location>
    </subcellularLocation>
</comment>
<comment type="PTM">
    <text evidence="1">4'-phosphopantetheine is transferred from CoA to a specific serine of apo-ACP by AcpS. This modification is essential for activity because fatty acids are bound in thioester linkage to the sulfhydryl of the prosthetic group.</text>
</comment>
<comment type="similarity">
    <text evidence="1">Belongs to the acyl carrier protein (ACP) family.</text>
</comment>
<evidence type="ECO:0000255" key="1">
    <source>
        <dbReference type="HAMAP-Rule" id="MF_01217"/>
    </source>
</evidence>
<evidence type="ECO:0000255" key="2">
    <source>
        <dbReference type="PROSITE-ProRule" id="PRU00258"/>
    </source>
</evidence>
<sequence>MSDVLERVRKIVIEHLDADPEKVTEKASFIDDLGADSLDNVELVMAFEEEFDIEIPDDAAEHIQTVGDAVKFIQERLGA</sequence>
<reference key="1">
    <citation type="journal article" date="2008" name="BMC Genomics">
        <title>Complete genome of Phenylobacterium zucineum - a novel facultative intracellular bacterium isolated from human erythroleukemia cell line K562.</title>
        <authorList>
            <person name="Luo Y."/>
            <person name="Xu X."/>
            <person name="Ding Z."/>
            <person name="Liu Z."/>
            <person name="Zhang B."/>
            <person name="Yan Z."/>
            <person name="Sun J."/>
            <person name="Hu S."/>
            <person name="Hu X."/>
        </authorList>
    </citation>
    <scope>NUCLEOTIDE SEQUENCE [LARGE SCALE GENOMIC DNA]</scope>
    <source>
        <strain>HLK1</strain>
    </source>
</reference>
<gene>
    <name evidence="1" type="primary">acpP</name>
    <name type="ordered locus">PHZ_c1559</name>
</gene>
<dbReference type="EMBL" id="CP000747">
    <property type="protein sequence ID" value="ACG77970.1"/>
    <property type="molecule type" value="Genomic_DNA"/>
</dbReference>
<dbReference type="RefSeq" id="WP_012522113.1">
    <property type="nucleotide sequence ID" value="NC_011144.1"/>
</dbReference>
<dbReference type="SMR" id="B4RAG3"/>
<dbReference type="STRING" id="450851.PHZ_c1559"/>
<dbReference type="KEGG" id="pzu:PHZ_c1559"/>
<dbReference type="eggNOG" id="COG0236">
    <property type="taxonomic scope" value="Bacteria"/>
</dbReference>
<dbReference type="HOGENOM" id="CLU_108696_5_1_5"/>
<dbReference type="OrthoDB" id="9804551at2"/>
<dbReference type="UniPathway" id="UPA00094"/>
<dbReference type="Proteomes" id="UP000001868">
    <property type="component" value="Chromosome"/>
</dbReference>
<dbReference type="GO" id="GO:0005829">
    <property type="term" value="C:cytosol"/>
    <property type="evidence" value="ECO:0007669"/>
    <property type="project" value="TreeGrafter"/>
</dbReference>
<dbReference type="GO" id="GO:0016020">
    <property type="term" value="C:membrane"/>
    <property type="evidence" value="ECO:0007669"/>
    <property type="project" value="GOC"/>
</dbReference>
<dbReference type="GO" id="GO:0000035">
    <property type="term" value="F:acyl binding"/>
    <property type="evidence" value="ECO:0007669"/>
    <property type="project" value="TreeGrafter"/>
</dbReference>
<dbReference type="GO" id="GO:0000036">
    <property type="term" value="F:acyl carrier activity"/>
    <property type="evidence" value="ECO:0007669"/>
    <property type="project" value="UniProtKB-UniRule"/>
</dbReference>
<dbReference type="GO" id="GO:0009245">
    <property type="term" value="P:lipid A biosynthetic process"/>
    <property type="evidence" value="ECO:0007669"/>
    <property type="project" value="TreeGrafter"/>
</dbReference>
<dbReference type="FunFam" id="1.10.1200.10:FF:000003">
    <property type="entry name" value="Acyl carrier protein"/>
    <property type="match status" value="1"/>
</dbReference>
<dbReference type="Gene3D" id="1.10.1200.10">
    <property type="entry name" value="ACP-like"/>
    <property type="match status" value="1"/>
</dbReference>
<dbReference type="HAMAP" id="MF_01217">
    <property type="entry name" value="Acyl_carrier"/>
    <property type="match status" value="1"/>
</dbReference>
<dbReference type="InterPro" id="IPR003231">
    <property type="entry name" value="ACP"/>
</dbReference>
<dbReference type="InterPro" id="IPR036736">
    <property type="entry name" value="ACP-like_sf"/>
</dbReference>
<dbReference type="InterPro" id="IPR009081">
    <property type="entry name" value="PP-bd_ACP"/>
</dbReference>
<dbReference type="NCBIfam" id="TIGR00517">
    <property type="entry name" value="acyl_carrier"/>
    <property type="match status" value="1"/>
</dbReference>
<dbReference type="NCBIfam" id="NF002148">
    <property type="entry name" value="PRK00982.1-2"/>
    <property type="match status" value="1"/>
</dbReference>
<dbReference type="NCBIfam" id="NF002149">
    <property type="entry name" value="PRK00982.1-3"/>
    <property type="match status" value="1"/>
</dbReference>
<dbReference type="NCBIfam" id="NF002150">
    <property type="entry name" value="PRK00982.1-4"/>
    <property type="match status" value="1"/>
</dbReference>
<dbReference type="NCBIfam" id="NF002151">
    <property type="entry name" value="PRK00982.1-5"/>
    <property type="match status" value="1"/>
</dbReference>
<dbReference type="PANTHER" id="PTHR20863">
    <property type="entry name" value="ACYL CARRIER PROTEIN"/>
    <property type="match status" value="1"/>
</dbReference>
<dbReference type="PANTHER" id="PTHR20863:SF76">
    <property type="entry name" value="CARRIER DOMAIN-CONTAINING PROTEIN"/>
    <property type="match status" value="1"/>
</dbReference>
<dbReference type="Pfam" id="PF00550">
    <property type="entry name" value="PP-binding"/>
    <property type="match status" value="1"/>
</dbReference>
<dbReference type="SUPFAM" id="SSF47336">
    <property type="entry name" value="ACP-like"/>
    <property type="match status" value="1"/>
</dbReference>
<dbReference type="PROSITE" id="PS50075">
    <property type="entry name" value="CARRIER"/>
    <property type="match status" value="1"/>
</dbReference>
<name>ACP_PHEZH</name>
<organism>
    <name type="scientific">Phenylobacterium zucineum (strain HLK1)</name>
    <dbReference type="NCBI Taxonomy" id="450851"/>
    <lineage>
        <taxon>Bacteria</taxon>
        <taxon>Pseudomonadati</taxon>
        <taxon>Pseudomonadota</taxon>
        <taxon>Alphaproteobacteria</taxon>
        <taxon>Caulobacterales</taxon>
        <taxon>Caulobacteraceae</taxon>
        <taxon>Phenylobacterium</taxon>
    </lineage>
</organism>